<feature type="chain" id="PRO_1000079705" description="GTPase Era">
    <location>
        <begin position="1"/>
        <end position="300"/>
    </location>
</feature>
<feature type="domain" description="Era-type G" evidence="2">
    <location>
        <begin position="6"/>
        <end position="173"/>
    </location>
</feature>
<feature type="domain" description="KH type-2" evidence="1">
    <location>
        <begin position="204"/>
        <end position="281"/>
    </location>
</feature>
<feature type="region of interest" description="G1" evidence="2">
    <location>
        <begin position="14"/>
        <end position="21"/>
    </location>
</feature>
<feature type="region of interest" description="G2" evidence="2">
    <location>
        <begin position="40"/>
        <end position="44"/>
    </location>
</feature>
<feature type="region of interest" description="G3" evidence="2">
    <location>
        <begin position="61"/>
        <end position="64"/>
    </location>
</feature>
<feature type="region of interest" description="G4" evidence="2">
    <location>
        <begin position="123"/>
        <end position="126"/>
    </location>
</feature>
<feature type="region of interest" description="G5" evidence="2">
    <location>
        <begin position="152"/>
        <end position="154"/>
    </location>
</feature>
<feature type="binding site" evidence="1">
    <location>
        <begin position="14"/>
        <end position="21"/>
    </location>
    <ligand>
        <name>GTP</name>
        <dbReference type="ChEBI" id="CHEBI:37565"/>
    </ligand>
</feature>
<feature type="binding site" evidence="1">
    <location>
        <begin position="61"/>
        <end position="65"/>
    </location>
    <ligand>
        <name>GTP</name>
        <dbReference type="ChEBI" id="CHEBI:37565"/>
    </ligand>
</feature>
<feature type="binding site" evidence="1">
    <location>
        <begin position="123"/>
        <end position="126"/>
    </location>
    <ligand>
        <name>GTP</name>
        <dbReference type="ChEBI" id="CHEBI:37565"/>
    </ligand>
</feature>
<dbReference type="EMBL" id="CP000233">
    <property type="protein sequence ID" value="ABD99705.1"/>
    <property type="molecule type" value="Genomic_DNA"/>
</dbReference>
<dbReference type="RefSeq" id="WP_011476024.1">
    <property type="nucleotide sequence ID" value="NC_007929.1"/>
</dbReference>
<dbReference type="RefSeq" id="YP_535788.1">
    <property type="nucleotide sequence ID" value="NC_007929.1"/>
</dbReference>
<dbReference type="SMR" id="Q1WTU6"/>
<dbReference type="STRING" id="362948.LSL_0895"/>
<dbReference type="KEGG" id="lsl:LSL_0895"/>
<dbReference type="PATRIC" id="fig|362948.14.peg.970"/>
<dbReference type="HOGENOM" id="CLU_038009_1_0_9"/>
<dbReference type="OrthoDB" id="9805918at2"/>
<dbReference type="Proteomes" id="UP000006559">
    <property type="component" value="Chromosome"/>
</dbReference>
<dbReference type="GO" id="GO:0005829">
    <property type="term" value="C:cytosol"/>
    <property type="evidence" value="ECO:0007669"/>
    <property type="project" value="TreeGrafter"/>
</dbReference>
<dbReference type="GO" id="GO:0005886">
    <property type="term" value="C:plasma membrane"/>
    <property type="evidence" value="ECO:0007669"/>
    <property type="project" value="UniProtKB-SubCell"/>
</dbReference>
<dbReference type="GO" id="GO:0005525">
    <property type="term" value="F:GTP binding"/>
    <property type="evidence" value="ECO:0007669"/>
    <property type="project" value="UniProtKB-UniRule"/>
</dbReference>
<dbReference type="GO" id="GO:0003924">
    <property type="term" value="F:GTPase activity"/>
    <property type="evidence" value="ECO:0007669"/>
    <property type="project" value="UniProtKB-UniRule"/>
</dbReference>
<dbReference type="GO" id="GO:0043024">
    <property type="term" value="F:ribosomal small subunit binding"/>
    <property type="evidence" value="ECO:0007669"/>
    <property type="project" value="TreeGrafter"/>
</dbReference>
<dbReference type="GO" id="GO:0070181">
    <property type="term" value="F:small ribosomal subunit rRNA binding"/>
    <property type="evidence" value="ECO:0007669"/>
    <property type="project" value="UniProtKB-UniRule"/>
</dbReference>
<dbReference type="GO" id="GO:0000028">
    <property type="term" value="P:ribosomal small subunit assembly"/>
    <property type="evidence" value="ECO:0007669"/>
    <property type="project" value="TreeGrafter"/>
</dbReference>
<dbReference type="CDD" id="cd04163">
    <property type="entry name" value="Era"/>
    <property type="match status" value="1"/>
</dbReference>
<dbReference type="CDD" id="cd22534">
    <property type="entry name" value="KH-II_Era"/>
    <property type="match status" value="1"/>
</dbReference>
<dbReference type="FunFam" id="3.30.300.20:FF:000003">
    <property type="entry name" value="GTPase Era"/>
    <property type="match status" value="1"/>
</dbReference>
<dbReference type="FunFam" id="3.40.50.300:FF:000094">
    <property type="entry name" value="GTPase Era"/>
    <property type="match status" value="1"/>
</dbReference>
<dbReference type="Gene3D" id="3.30.300.20">
    <property type="match status" value="1"/>
</dbReference>
<dbReference type="Gene3D" id="3.40.50.300">
    <property type="entry name" value="P-loop containing nucleotide triphosphate hydrolases"/>
    <property type="match status" value="1"/>
</dbReference>
<dbReference type="HAMAP" id="MF_00367">
    <property type="entry name" value="GTPase_Era"/>
    <property type="match status" value="1"/>
</dbReference>
<dbReference type="InterPro" id="IPR030388">
    <property type="entry name" value="G_ERA_dom"/>
</dbReference>
<dbReference type="InterPro" id="IPR006073">
    <property type="entry name" value="GTP-bd"/>
</dbReference>
<dbReference type="InterPro" id="IPR005662">
    <property type="entry name" value="GTPase_Era-like"/>
</dbReference>
<dbReference type="InterPro" id="IPR015946">
    <property type="entry name" value="KH_dom-like_a/b"/>
</dbReference>
<dbReference type="InterPro" id="IPR004044">
    <property type="entry name" value="KH_dom_type_2"/>
</dbReference>
<dbReference type="InterPro" id="IPR009019">
    <property type="entry name" value="KH_sf_prok-type"/>
</dbReference>
<dbReference type="InterPro" id="IPR027417">
    <property type="entry name" value="P-loop_NTPase"/>
</dbReference>
<dbReference type="InterPro" id="IPR005225">
    <property type="entry name" value="Small_GTP-bd"/>
</dbReference>
<dbReference type="NCBIfam" id="TIGR00436">
    <property type="entry name" value="era"/>
    <property type="match status" value="1"/>
</dbReference>
<dbReference type="NCBIfam" id="NF000908">
    <property type="entry name" value="PRK00089.1"/>
    <property type="match status" value="1"/>
</dbReference>
<dbReference type="NCBIfam" id="TIGR00231">
    <property type="entry name" value="small_GTP"/>
    <property type="match status" value="1"/>
</dbReference>
<dbReference type="PANTHER" id="PTHR42698">
    <property type="entry name" value="GTPASE ERA"/>
    <property type="match status" value="1"/>
</dbReference>
<dbReference type="PANTHER" id="PTHR42698:SF1">
    <property type="entry name" value="GTPASE ERA, MITOCHONDRIAL"/>
    <property type="match status" value="1"/>
</dbReference>
<dbReference type="Pfam" id="PF07650">
    <property type="entry name" value="KH_2"/>
    <property type="match status" value="1"/>
</dbReference>
<dbReference type="Pfam" id="PF01926">
    <property type="entry name" value="MMR_HSR1"/>
    <property type="match status" value="1"/>
</dbReference>
<dbReference type="PRINTS" id="PR00326">
    <property type="entry name" value="GTP1OBG"/>
</dbReference>
<dbReference type="SUPFAM" id="SSF52540">
    <property type="entry name" value="P-loop containing nucleoside triphosphate hydrolases"/>
    <property type="match status" value="1"/>
</dbReference>
<dbReference type="SUPFAM" id="SSF54814">
    <property type="entry name" value="Prokaryotic type KH domain (KH-domain type II)"/>
    <property type="match status" value="1"/>
</dbReference>
<dbReference type="PROSITE" id="PS51713">
    <property type="entry name" value="G_ERA"/>
    <property type="match status" value="1"/>
</dbReference>
<dbReference type="PROSITE" id="PS50823">
    <property type="entry name" value="KH_TYPE_2"/>
    <property type="match status" value="1"/>
</dbReference>
<sequence>MQNNFHSGFVAILGRPNVGKSTFLNRVVGQKIAIMSDKAQTTRNKIQGIYTEDDAQIVFIDTPGIHKPHSRLGDFMVESALSTLNEVDAVLFMVNATQKRGRGDDFIIERLKNVKKPIYLVINKIDQIHPDKLLQIMDDYRNTLDYAEVFPISALEGNNCPELIESLVNTLPEGPQYYPADQITDHPERFIAGELIREKVLELTREEVPHSVAVVVDRIHREDAEKVLVQATIVVERNSQKGIIIGKGGKMLKQIGVKARKDIELMLGDKVYLELWVKVQPNWKDRQVDLQALGYKQDDY</sequence>
<proteinExistence type="inferred from homology"/>
<keyword id="KW-1003">Cell membrane</keyword>
<keyword id="KW-0963">Cytoplasm</keyword>
<keyword id="KW-0342">GTP-binding</keyword>
<keyword id="KW-0472">Membrane</keyword>
<keyword id="KW-0547">Nucleotide-binding</keyword>
<keyword id="KW-1185">Reference proteome</keyword>
<keyword id="KW-0690">Ribosome biogenesis</keyword>
<keyword id="KW-0694">RNA-binding</keyword>
<keyword id="KW-0699">rRNA-binding</keyword>
<organism>
    <name type="scientific">Ligilactobacillus salivarius (strain UCC118)</name>
    <name type="common">Lactobacillus salivarius</name>
    <dbReference type="NCBI Taxonomy" id="362948"/>
    <lineage>
        <taxon>Bacteria</taxon>
        <taxon>Bacillati</taxon>
        <taxon>Bacillota</taxon>
        <taxon>Bacilli</taxon>
        <taxon>Lactobacillales</taxon>
        <taxon>Lactobacillaceae</taxon>
        <taxon>Ligilactobacillus</taxon>
    </lineage>
</organism>
<protein>
    <recommendedName>
        <fullName evidence="1">GTPase Era</fullName>
    </recommendedName>
</protein>
<evidence type="ECO:0000255" key="1">
    <source>
        <dbReference type="HAMAP-Rule" id="MF_00367"/>
    </source>
</evidence>
<evidence type="ECO:0000255" key="2">
    <source>
        <dbReference type="PROSITE-ProRule" id="PRU01050"/>
    </source>
</evidence>
<name>ERA_LIGS1</name>
<comment type="function">
    <text evidence="1">An essential GTPase that binds both GDP and GTP, with rapid nucleotide exchange. Plays a role in 16S rRNA processing and 30S ribosomal subunit biogenesis and possibly also in cell cycle regulation and energy metabolism.</text>
</comment>
<comment type="subunit">
    <text evidence="1">Monomer.</text>
</comment>
<comment type="subcellular location">
    <subcellularLocation>
        <location>Cytoplasm</location>
    </subcellularLocation>
    <subcellularLocation>
        <location evidence="1">Cell membrane</location>
        <topology evidence="1">Peripheral membrane protein</topology>
    </subcellularLocation>
</comment>
<comment type="similarity">
    <text evidence="1 2">Belongs to the TRAFAC class TrmE-Era-EngA-EngB-Septin-like GTPase superfamily. Era GTPase family.</text>
</comment>
<gene>
    <name evidence="1" type="primary">era</name>
    <name type="ordered locus">LSL_0895</name>
</gene>
<reference key="1">
    <citation type="journal article" date="2006" name="Proc. Natl. Acad. Sci. U.S.A.">
        <title>Multireplicon genome architecture of Lactobacillus salivarius.</title>
        <authorList>
            <person name="Claesson M.J."/>
            <person name="Li Y."/>
            <person name="Leahy S."/>
            <person name="Canchaya C."/>
            <person name="van Pijkeren J.P."/>
            <person name="Cerdeno-Tarraga A.M."/>
            <person name="Parkhill J."/>
            <person name="Flynn S."/>
            <person name="O'Sullivan G.C."/>
            <person name="Collins J.K."/>
            <person name="Higgins D."/>
            <person name="Shanahan F."/>
            <person name="Fitzgerald G.F."/>
            <person name="van Sinderen D."/>
            <person name="O'Toole P.W."/>
        </authorList>
    </citation>
    <scope>NUCLEOTIDE SEQUENCE [LARGE SCALE GENOMIC DNA]</scope>
    <source>
        <strain>UCC118</strain>
    </source>
</reference>
<accession>Q1WTU6</accession>